<comment type="function">
    <text evidence="1">Catalyzes the methyl esterification of L-isoaspartyl residues in peptides and proteins that result from spontaneous decomposition of normal L-aspartyl and L-asparaginyl residues. It plays a role in the repair and/or degradation of damaged proteins.</text>
</comment>
<comment type="catalytic activity">
    <reaction evidence="1">
        <text>[protein]-L-isoaspartate + S-adenosyl-L-methionine = [protein]-L-isoaspartate alpha-methyl ester + S-adenosyl-L-homocysteine</text>
        <dbReference type="Rhea" id="RHEA:12705"/>
        <dbReference type="Rhea" id="RHEA-COMP:12143"/>
        <dbReference type="Rhea" id="RHEA-COMP:12144"/>
        <dbReference type="ChEBI" id="CHEBI:57856"/>
        <dbReference type="ChEBI" id="CHEBI:59789"/>
        <dbReference type="ChEBI" id="CHEBI:90596"/>
        <dbReference type="ChEBI" id="CHEBI:90598"/>
        <dbReference type="EC" id="2.1.1.77"/>
    </reaction>
</comment>
<comment type="subcellular location">
    <subcellularLocation>
        <location evidence="1">Cytoplasm</location>
    </subcellularLocation>
</comment>
<comment type="similarity">
    <text evidence="1">Belongs to the methyltransferase superfamily. L-isoaspartyl/D-aspartyl protein methyltransferase family.</text>
</comment>
<feature type="chain" id="PRO_0000351861" description="Protein-L-isoaspartate O-methyltransferase">
    <location>
        <begin position="1"/>
        <end position="216"/>
    </location>
</feature>
<feature type="active site" evidence="1">
    <location>
        <position position="61"/>
    </location>
</feature>
<keyword id="KW-0963">Cytoplasm</keyword>
<keyword id="KW-0489">Methyltransferase</keyword>
<keyword id="KW-1185">Reference proteome</keyword>
<keyword id="KW-0949">S-adenosyl-L-methionine</keyword>
<keyword id="KW-0808">Transferase</keyword>
<protein>
    <recommendedName>
        <fullName evidence="1">Protein-L-isoaspartate O-methyltransferase</fullName>
        <ecNumber evidence="1">2.1.1.77</ecNumber>
    </recommendedName>
    <alternativeName>
        <fullName evidence="1">L-isoaspartyl protein carboxyl methyltransferase</fullName>
    </alternativeName>
    <alternativeName>
        <fullName evidence="1">Protein L-isoaspartyl methyltransferase</fullName>
    </alternativeName>
    <alternativeName>
        <fullName evidence="1">Protein-beta-aspartate methyltransferase</fullName>
        <shortName evidence="1">PIMT</shortName>
    </alternativeName>
</protein>
<name>PIMT_GEOMG</name>
<dbReference type="EC" id="2.1.1.77" evidence="1"/>
<dbReference type="EMBL" id="CP000148">
    <property type="protein sequence ID" value="ABB31654.1"/>
    <property type="molecule type" value="Genomic_DNA"/>
</dbReference>
<dbReference type="RefSeq" id="WP_004511647.1">
    <property type="nucleotide sequence ID" value="NC_007517.1"/>
</dbReference>
<dbReference type="SMR" id="Q39VS0"/>
<dbReference type="STRING" id="269799.Gmet_1420"/>
<dbReference type="KEGG" id="gme:Gmet_1420"/>
<dbReference type="eggNOG" id="COG2518">
    <property type="taxonomic scope" value="Bacteria"/>
</dbReference>
<dbReference type="HOGENOM" id="CLU_055432_2_0_7"/>
<dbReference type="Proteomes" id="UP000007073">
    <property type="component" value="Chromosome"/>
</dbReference>
<dbReference type="GO" id="GO:0005737">
    <property type="term" value="C:cytoplasm"/>
    <property type="evidence" value="ECO:0007669"/>
    <property type="project" value="UniProtKB-SubCell"/>
</dbReference>
<dbReference type="GO" id="GO:0004719">
    <property type="term" value="F:protein-L-isoaspartate (D-aspartate) O-methyltransferase activity"/>
    <property type="evidence" value="ECO:0007669"/>
    <property type="project" value="UniProtKB-UniRule"/>
</dbReference>
<dbReference type="GO" id="GO:0032259">
    <property type="term" value="P:methylation"/>
    <property type="evidence" value="ECO:0007669"/>
    <property type="project" value="UniProtKB-KW"/>
</dbReference>
<dbReference type="GO" id="GO:0036211">
    <property type="term" value="P:protein modification process"/>
    <property type="evidence" value="ECO:0007669"/>
    <property type="project" value="UniProtKB-UniRule"/>
</dbReference>
<dbReference type="GO" id="GO:0030091">
    <property type="term" value="P:protein repair"/>
    <property type="evidence" value="ECO:0007669"/>
    <property type="project" value="UniProtKB-UniRule"/>
</dbReference>
<dbReference type="CDD" id="cd02440">
    <property type="entry name" value="AdoMet_MTases"/>
    <property type="match status" value="1"/>
</dbReference>
<dbReference type="FunFam" id="3.40.50.150:FF:000010">
    <property type="entry name" value="Protein-L-isoaspartate O-methyltransferase"/>
    <property type="match status" value="1"/>
</dbReference>
<dbReference type="Gene3D" id="3.40.50.150">
    <property type="entry name" value="Vaccinia Virus protein VP39"/>
    <property type="match status" value="1"/>
</dbReference>
<dbReference type="HAMAP" id="MF_00090">
    <property type="entry name" value="PIMT"/>
    <property type="match status" value="1"/>
</dbReference>
<dbReference type="InterPro" id="IPR000682">
    <property type="entry name" value="PCMT"/>
</dbReference>
<dbReference type="InterPro" id="IPR029063">
    <property type="entry name" value="SAM-dependent_MTases_sf"/>
</dbReference>
<dbReference type="NCBIfam" id="TIGR00080">
    <property type="entry name" value="pimt"/>
    <property type="match status" value="1"/>
</dbReference>
<dbReference type="NCBIfam" id="NF001453">
    <property type="entry name" value="PRK00312.1"/>
    <property type="match status" value="1"/>
</dbReference>
<dbReference type="PANTHER" id="PTHR11579">
    <property type="entry name" value="PROTEIN-L-ISOASPARTATE O-METHYLTRANSFERASE"/>
    <property type="match status" value="1"/>
</dbReference>
<dbReference type="PANTHER" id="PTHR11579:SF0">
    <property type="entry name" value="PROTEIN-L-ISOASPARTATE(D-ASPARTATE) O-METHYLTRANSFERASE"/>
    <property type="match status" value="1"/>
</dbReference>
<dbReference type="Pfam" id="PF01135">
    <property type="entry name" value="PCMT"/>
    <property type="match status" value="1"/>
</dbReference>
<dbReference type="SUPFAM" id="SSF53335">
    <property type="entry name" value="S-adenosyl-L-methionine-dependent methyltransferases"/>
    <property type="match status" value="1"/>
</dbReference>
<dbReference type="PROSITE" id="PS01279">
    <property type="entry name" value="PCMT"/>
    <property type="match status" value="1"/>
</dbReference>
<accession>Q39VS0</accession>
<proteinExistence type="inferred from homology"/>
<sequence length="216" mass="23890">MNFDIARKRMVETQIISRGVKDRRLIEAMLKVPRHVFVEEAMAAQAYSDTPLPIGEKQTISQPYMVALMTELLELSGREKVLEIGTGSGYQAAILATLADRVYTVERIRPLALKARRALDRLGLLNVNIKISDGTIGWEEEAPFDAIIVTAGAPDVPDKLAEQLAVGGRLVIPVGNQFDQVLVRITKQEDGSLIRENVTGCRFVKLVGKYGWGTEE</sequence>
<organism>
    <name type="scientific">Geobacter metallireducens (strain ATCC 53774 / DSM 7210 / GS-15)</name>
    <dbReference type="NCBI Taxonomy" id="269799"/>
    <lineage>
        <taxon>Bacteria</taxon>
        <taxon>Pseudomonadati</taxon>
        <taxon>Thermodesulfobacteriota</taxon>
        <taxon>Desulfuromonadia</taxon>
        <taxon>Geobacterales</taxon>
        <taxon>Geobacteraceae</taxon>
        <taxon>Geobacter</taxon>
    </lineage>
</organism>
<gene>
    <name evidence="1" type="primary">pcm</name>
    <name type="ordered locus">Gmet_1420</name>
</gene>
<evidence type="ECO:0000255" key="1">
    <source>
        <dbReference type="HAMAP-Rule" id="MF_00090"/>
    </source>
</evidence>
<reference key="1">
    <citation type="journal article" date="2009" name="BMC Microbiol.">
        <title>The genome sequence of Geobacter metallireducens: features of metabolism, physiology and regulation common and dissimilar to Geobacter sulfurreducens.</title>
        <authorList>
            <person name="Aklujkar M."/>
            <person name="Krushkal J."/>
            <person name="DiBartolo G."/>
            <person name="Lapidus A."/>
            <person name="Land M.L."/>
            <person name="Lovley D.R."/>
        </authorList>
    </citation>
    <scope>NUCLEOTIDE SEQUENCE [LARGE SCALE GENOMIC DNA]</scope>
    <source>
        <strain>ATCC 53774 / DSM 7210 / GS-15</strain>
    </source>
</reference>